<keyword id="KW-0067">ATP-binding</keyword>
<keyword id="KW-0963">Cytoplasm</keyword>
<keyword id="KW-0418">Kinase</keyword>
<keyword id="KW-0545">Nucleotide biosynthesis</keyword>
<keyword id="KW-0547">Nucleotide-binding</keyword>
<keyword id="KW-1185">Reference proteome</keyword>
<keyword id="KW-0808">Transferase</keyword>
<gene>
    <name evidence="1" type="primary">adk</name>
    <name type="ordered locus">NGO_0400</name>
</gene>
<reference key="1">
    <citation type="submission" date="2003-03" db="EMBL/GenBank/DDBJ databases">
        <title>The complete genome sequence of Neisseria gonorrhoeae.</title>
        <authorList>
            <person name="Lewis L.A."/>
            <person name="Gillaspy A.F."/>
            <person name="McLaughlin R.E."/>
            <person name="Gipson M."/>
            <person name="Ducey T.F."/>
            <person name="Ownbey T."/>
            <person name="Hartman K."/>
            <person name="Nydick C."/>
            <person name="Carson M.B."/>
            <person name="Vaughn J."/>
            <person name="Thomson C."/>
            <person name="Song L."/>
            <person name="Lin S."/>
            <person name="Yuan X."/>
            <person name="Najar F."/>
            <person name="Zhan M."/>
            <person name="Ren Q."/>
            <person name="Zhu H."/>
            <person name="Qi S."/>
            <person name="Kenton S.M."/>
            <person name="Lai H."/>
            <person name="White J.D."/>
            <person name="Clifton S."/>
            <person name="Roe B.A."/>
            <person name="Dyer D.W."/>
        </authorList>
    </citation>
    <scope>NUCLEOTIDE SEQUENCE [LARGE SCALE GENOMIC DNA]</scope>
    <source>
        <strain>ATCC 700825 / FA 1090</strain>
    </source>
</reference>
<protein>
    <recommendedName>
        <fullName evidence="1">Adenylate kinase</fullName>
        <shortName evidence="1">AK</shortName>
        <ecNumber evidence="1">2.7.4.3</ecNumber>
    </recommendedName>
    <alternativeName>
        <fullName evidence="1">ATP-AMP transphosphorylase</fullName>
    </alternativeName>
    <alternativeName>
        <fullName evidence="1">ATP:AMP phosphotransferase</fullName>
    </alternativeName>
    <alternativeName>
        <fullName evidence="1">Adenylate monophosphate kinase</fullName>
    </alternativeName>
</protein>
<feature type="chain" id="PRO_1000058862" description="Adenylate kinase">
    <location>
        <begin position="1"/>
        <end position="215"/>
    </location>
</feature>
<feature type="region of interest" description="NMP" evidence="1">
    <location>
        <begin position="30"/>
        <end position="59"/>
    </location>
</feature>
<feature type="region of interest" description="LID" evidence="1">
    <location>
        <begin position="122"/>
        <end position="159"/>
    </location>
</feature>
<feature type="binding site" evidence="1">
    <location>
        <begin position="10"/>
        <end position="15"/>
    </location>
    <ligand>
        <name>ATP</name>
        <dbReference type="ChEBI" id="CHEBI:30616"/>
    </ligand>
</feature>
<feature type="binding site" evidence="1">
    <location>
        <position position="31"/>
    </location>
    <ligand>
        <name>AMP</name>
        <dbReference type="ChEBI" id="CHEBI:456215"/>
    </ligand>
</feature>
<feature type="binding site" evidence="1">
    <location>
        <position position="36"/>
    </location>
    <ligand>
        <name>AMP</name>
        <dbReference type="ChEBI" id="CHEBI:456215"/>
    </ligand>
</feature>
<feature type="binding site" evidence="1">
    <location>
        <begin position="57"/>
        <end position="59"/>
    </location>
    <ligand>
        <name>AMP</name>
        <dbReference type="ChEBI" id="CHEBI:456215"/>
    </ligand>
</feature>
<feature type="binding site" evidence="1">
    <location>
        <begin position="85"/>
        <end position="88"/>
    </location>
    <ligand>
        <name>AMP</name>
        <dbReference type="ChEBI" id="CHEBI:456215"/>
    </ligand>
</feature>
<feature type="binding site" evidence="1">
    <location>
        <position position="92"/>
    </location>
    <ligand>
        <name>AMP</name>
        <dbReference type="ChEBI" id="CHEBI:456215"/>
    </ligand>
</feature>
<feature type="binding site" evidence="1">
    <location>
        <position position="123"/>
    </location>
    <ligand>
        <name>ATP</name>
        <dbReference type="ChEBI" id="CHEBI:30616"/>
    </ligand>
</feature>
<feature type="binding site" evidence="1">
    <location>
        <begin position="132"/>
        <end position="133"/>
    </location>
    <ligand>
        <name>ATP</name>
        <dbReference type="ChEBI" id="CHEBI:30616"/>
    </ligand>
</feature>
<feature type="binding site" evidence="1">
    <location>
        <position position="156"/>
    </location>
    <ligand>
        <name>AMP</name>
        <dbReference type="ChEBI" id="CHEBI:456215"/>
    </ligand>
</feature>
<feature type="binding site" evidence="1">
    <location>
        <position position="167"/>
    </location>
    <ligand>
        <name>AMP</name>
        <dbReference type="ChEBI" id="CHEBI:456215"/>
    </ligand>
</feature>
<feature type="binding site" evidence="1">
    <location>
        <position position="200"/>
    </location>
    <ligand>
        <name>ATP</name>
        <dbReference type="ChEBI" id="CHEBI:30616"/>
    </ligand>
</feature>
<name>KAD_NEIG1</name>
<comment type="function">
    <text evidence="1">Catalyzes the reversible transfer of the terminal phosphate group between ATP and AMP. Plays an important role in cellular energy homeostasis and in adenine nucleotide metabolism.</text>
</comment>
<comment type="catalytic activity">
    <reaction evidence="1">
        <text>AMP + ATP = 2 ADP</text>
        <dbReference type="Rhea" id="RHEA:12973"/>
        <dbReference type="ChEBI" id="CHEBI:30616"/>
        <dbReference type="ChEBI" id="CHEBI:456215"/>
        <dbReference type="ChEBI" id="CHEBI:456216"/>
        <dbReference type="EC" id="2.7.4.3"/>
    </reaction>
</comment>
<comment type="pathway">
    <text evidence="1">Purine metabolism; AMP biosynthesis via salvage pathway; AMP from ADP: step 1/1.</text>
</comment>
<comment type="subunit">
    <text evidence="1">Monomer.</text>
</comment>
<comment type="subcellular location">
    <subcellularLocation>
        <location evidence="1">Cytoplasm</location>
    </subcellularLocation>
</comment>
<comment type="domain">
    <text evidence="1">Consists of three domains, a large central CORE domain and two small peripheral domains, NMPbind and LID, which undergo movements during catalysis. The LID domain closes over the site of phosphoryl transfer upon ATP binding. Assembling and dissambling the active center during each catalytic cycle provides an effective means to prevent ATP hydrolysis.</text>
</comment>
<comment type="similarity">
    <text evidence="1">Belongs to the adenylate kinase family.</text>
</comment>
<evidence type="ECO:0000255" key="1">
    <source>
        <dbReference type="HAMAP-Rule" id="MF_00235"/>
    </source>
</evidence>
<proteinExistence type="inferred from homology"/>
<sequence>MKALLLGAPGAGKGTQAQFITAAFGIPQISTGDMLRAAIKAGTPLGLEAKKIIDEGGLVRDDIIIGMVKERIAQDDCKNGFLFDGFPRTLAQAEAMVEAGVGLDAVVEIDVSDSVIVDRMSGRRVHLASGRTYHVTYNPPKTEGKDDVTGEDLIQRDDDKEETVKKRLAVYHEQTEVLVDFYSKLEGEHAPKYIKVDGTQAVEAVKAEVLGALGK</sequence>
<dbReference type="EC" id="2.7.4.3" evidence="1"/>
<dbReference type="EMBL" id="AE004969">
    <property type="protein sequence ID" value="AAW89144.1"/>
    <property type="molecule type" value="Genomic_DNA"/>
</dbReference>
<dbReference type="RefSeq" id="WP_003687832.1">
    <property type="nucleotide sequence ID" value="NC_002946.2"/>
</dbReference>
<dbReference type="RefSeq" id="YP_207556.1">
    <property type="nucleotide sequence ID" value="NC_002946.2"/>
</dbReference>
<dbReference type="SMR" id="Q5F9J3"/>
<dbReference type="STRING" id="242231.NGO_0400"/>
<dbReference type="GeneID" id="66752738"/>
<dbReference type="KEGG" id="ngo:NGO_0400"/>
<dbReference type="PATRIC" id="fig|242231.10.peg.482"/>
<dbReference type="HOGENOM" id="CLU_032354_1_2_4"/>
<dbReference type="UniPathway" id="UPA00588">
    <property type="reaction ID" value="UER00649"/>
</dbReference>
<dbReference type="Proteomes" id="UP000000535">
    <property type="component" value="Chromosome"/>
</dbReference>
<dbReference type="GO" id="GO:0005737">
    <property type="term" value="C:cytoplasm"/>
    <property type="evidence" value="ECO:0007669"/>
    <property type="project" value="UniProtKB-SubCell"/>
</dbReference>
<dbReference type="GO" id="GO:0004017">
    <property type="term" value="F:adenylate kinase activity"/>
    <property type="evidence" value="ECO:0007669"/>
    <property type="project" value="UniProtKB-UniRule"/>
</dbReference>
<dbReference type="GO" id="GO:0005524">
    <property type="term" value="F:ATP binding"/>
    <property type="evidence" value="ECO:0007669"/>
    <property type="project" value="UniProtKB-UniRule"/>
</dbReference>
<dbReference type="GO" id="GO:0044209">
    <property type="term" value="P:AMP salvage"/>
    <property type="evidence" value="ECO:0007669"/>
    <property type="project" value="UniProtKB-UniRule"/>
</dbReference>
<dbReference type="CDD" id="cd01428">
    <property type="entry name" value="ADK"/>
    <property type="match status" value="1"/>
</dbReference>
<dbReference type="FunFam" id="3.40.50.300:FF:000106">
    <property type="entry name" value="Adenylate kinase mitochondrial"/>
    <property type="match status" value="1"/>
</dbReference>
<dbReference type="Gene3D" id="3.40.50.300">
    <property type="entry name" value="P-loop containing nucleotide triphosphate hydrolases"/>
    <property type="match status" value="1"/>
</dbReference>
<dbReference type="HAMAP" id="MF_00235">
    <property type="entry name" value="Adenylate_kinase_Adk"/>
    <property type="match status" value="1"/>
</dbReference>
<dbReference type="InterPro" id="IPR006259">
    <property type="entry name" value="Adenyl_kin_sub"/>
</dbReference>
<dbReference type="InterPro" id="IPR000850">
    <property type="entry name" value="Adenylat/UMP-CMP_kin"/>
</dbReference>
<dbReference type="InterPro" id="IPR033690">
    <property type="entry name" value="Adenylat_kinase_CS"/>
</dbReference>
<dbReference type="InterPro" id="IPR007862">
    <property type="entry name" value="Adenylate_kinase_lid-dom"/>
</dbReference>
<dbReference type="InterPro" id="IPR027417">
    <property type="entry name" value="P-loop_NTPase"/>
</dbReference>
<dbReference type="NCBIfam" id="TIGR01351">
    <property type="entry name" value="adk"/>
    <property type="match status" value="1"/>
</dbReference>
<dbReference type="NCBIfam" id="NF001379">
    <property type="entry name" value="PRK00279.1-1"/>
    <property type="match status" value="1"/>
</dbReference>
<dbReference type="NCBIfam" id="NF001380">
    <property type="entry name" value="PRK00279.1-2"/>
    <property type="match status" value="1"/>
</dbReference>
<dbReference type="NCBIfam" id="NF001381">
    <property type="entry name" value="PRK00279.1-3"/>
    <property type="match status" value="1"/>
</dbReference>
<dbReference type="PANTHER" id="PTHR23359">
    <property type="entry name" value="NUCLEOTIDE KINASE"/>
    <property type="match status" value="1"/>
</dbReference>
<dbReference type="Pfam" id="PF00406">
    <property type="entry name" value="ADK"/>
    <property type="match status" value="1"/>
</dbReference>
<dbReference type="Pfam" id="PF05191">
    <property type="entry name" value="ADK_lid"/>
    <property type="match status" value="1"/>
</dbReference>
<dbReference type="PRINTS" id="PR00094">
    <property type="entry name" value="ADENYLTKNASE"/>
</dbReference>
<dbReference type="SUPFAM" id="SSF52540">
    <property type="entry name" value="P-loop containing nucleoside triphosphate hydrolases"/>
    <property type="match status" value="1"/>
</dbReference>
<dbReference type="PROSITE" id="PS00113">
    <property type="entry name" value="ADENYLATE_KINASE"/>
    <property type="match status" value="1"/>
</dbReference>
<organism>
    <name type="scientific">Neisseria gonorrhoeae (strain ATCC 700825 / FA 1090)</name>
    <dbReference type="NCBI Taxonomy" id="242231"/>
    <lineage>
        <taxon>Bacteria</taxon>
        <taxon>Pseudomonadati</taxon>
        <taxon>Pseudomonadota</taxon>
        <taxon>Betaproteobacteria</taxon>
        <taxon>Neisseriales</taxon>
        <taxon>Neisseriaceae</taxon>
        <taxon>Neisseria</taxon>
    </lineage>
</organism>
<accession>Q5F9J3</accession>